<keyword id="KW-0997">Cell inner membrane</keyword>
<keyword id="KW-1003">Cell membrane</keyword>
<keyword id="KW-0143">Chaperone</keyword>
<keyword id="KW-0472">Membrane</keyword>
<keyword id="KW-0653">Protein transport</keyword>
<keyword id="KW-0812">Transmembrane</keyword>
<keyword id="KW-1133">Transmembrane helix</keyword>
<keyword id="KW-0813">Transport</keyword>
<reference key="1">
    <citation type="submission" date="2007-03" db="EMBL/GenBank/DDBJ databases">
        <title>Complete sequence of chromosome 1 of Burkholderia vietnamiensis G4.</title>
        <authorList>
            <consortium name="US DOE Joint Genome Institute"/>
            <person name="Copeland A."/>
            <person name="Lucas S."/>
            <person name="Lapidus A."/>
            <person name="Barry K."/>
            <person name="Detter J.C."/>
            <person name="Glavina del Rio T."/>
            <person name="Hammon N."/>
            <person name="Israni S."/>
            <person name="Dalin E."/>
            <person name="Tice H."/>
            <person name="Pitluck S."/>
            <person name="Chain P."/>
            <person name="Malfatti S."/>
            <person name="Shin M."/>
            <person name="Vergez L."/>
            <person name="Schmutz J."/>
            <person name="Larimer F."/>
            <person name="Land M."/>
            <person name="Hauser L."/>
            <person name="Kyrpides N."/>
            <person name="Tiedje J."/>
            <person name="Richardson P."/>
        </authorList>
    </citation>
    <scope>NUCLEOTIDE SEQUENCE [LARGE SCALE GENOMIC DNA]</scope>
    <source>
        <strain>G4 / LMG 22486</strain>
    </source>
</reference>
<feature type="chain" id="PRO_1000070077" description="Membrane protein insertase YidC">
    <location>
        <begin position="1"/>
        <end position="554"/>
    </location>
</feature>
<feature type="transmembrane region" description="Helical" evidence="1">
    <location>
        <begin position="7"/>
        <end position="24"/>
    </location>
</feature>
<feature type="transmembrane region" description="Helical" evidence="1">
    <location>
        <begin position="362"/>
        <end position="382"/>
    </location>
</feature>
<feature type="transmembrane region" description="Helical" evidence="1">
    <location>
        <begin position="436"/>
        <end position="456"/>
    </location>
</feature>
<feature type="transmembrane region" description="Helical" evidence="1">
    <location>
        <begin position="475"/>
        <end position="495"/>
    </location>
</feature>
<feature type="transmembrane region" description="Helical" evidence="1">
    <location>
        <begin position="510"/>
        <end position="530"/>
    </location>
</feature>
<organism>
    <name type="scientific">Burkholderia vietnamiensis (strain G4 / LMG 22486)</name>
    <name type="common">Burkholderia cepacia (strain R1808)</name>
    <dbReference type="NCBI Taxonomy" id="269482"/>
    <lineage>
        <taxon>Bacteria</taxon>
        <taxon>Pseudomonadati</taxon>
        <taxon>Pseudomonadota</taxon>
        <taxon>Betaproteobacteria</taxon>
        <taxon>Burkholderiales</taxon>
        <taxon>Burkholderiaceae</taxon>
        <taxon>Burkholderia</taxon>
        <taxon>Burkholderia cepacia complex</taxon>
    </lineage>
</organism>
<comment type="function">
    <text evidence="1">Required for the insertion and/or proper folding and/or complex formation of integral membrane proteins into the membrane. Involved in integration of membrane proteins that insert both dependently and independently of the Sec translocase complex, as well as at least some lipoproteins. Aids folding of multispanning membrane proteins.</text>
</comment>
<comment type="subunit">
    <text evidence="1">Interacts with the Sec translocase complex via SecD. Specifically interacts with transmembrane segments of nascent integral membrane proteins during membrane integration.</text>
</comment>
<comment type="subcellular location">
    <subcellularLocation>
        <location evidence="1">Cell inner membrane</location>
        <topology evidence="1">Multi-pass membrane protein</topology>
    </subcellularLocation>
</comment>
<comment type="similarity">
    <text evidence="1">Belongs to the OXA1/ALB3/YidC family. Type 1 subfamily.</text>
</comment>
<protein>
    <recommendedName>
        <fullName evidence="1">Membrane protein insertase YidC</fullName>
    </recommendedName>
    <alternativeName>
        <fullName evidence="1">Foldase YidC</fullName>
    </alternativeName>
    <alternativeName>
        <fullName evidence="1">Membrane integrase YidC</fullName>
    </alternativeName>
    <alternativeName>
        <fullName evidence="1">Membrane protein YidC</fullName>
    </alternativeName>
</protein>
<accession>A4JJ46</accession>
<proteinExistence type="inferred from homology"/>
<dbReference type="EMBL" id="CP000614">
    <property type="protein sequence ID" value="ABO56299.1"/>
    <property type="molecule type" value="Genomic_DNA"/>
</dbReference>
<dbReference type="SMR" id="A4JJ46"/>
<dbReference type="KEGG" id="bvi:Bcep1808_3310"/>
<dbReference type="eggNOG" id="COG0706">
    <property type="taxonomic scope" value="Bacteria"/>
</dbReference>
<dbReference type="HOGENOM" id="CLU_016535_3_0_4"/>
<dbReference type="Proteomes" id="UP000002287">
    <property type="component" value="Chromosome 1"/>
</dbReference>
<dbReference type="GO" id="GO:0005886">
    <property type="term" value="C:plasma membrane"/>
    <property type="evidence" value="ECO:0007669"/>
    <property type="project" value="UniProtKB-SubCell"/>
</dbReference>
<dbReference type="GO" id="GO:0032977">
    <property type="term" value="F:membrane insertase activity"/>
    <property type="evidence" value="ECO:0007669"/>
    <property type="project" value="InterPro"/>
</dbReference>
<dbReference type="GO" id="GO:0051205">
    <property type="term" value="P:protein insertion into membrane"/>
    <property type="evidence" value="ECO:0007669"/>
    <property type="project" value="TreeGrafter"/>
</dbReference>
<dbReference type="GO" id="GO:0015031">
    <property type="term" value="P:protein transport"/>
    <property type="evidence" value="ECO:0007669"/>
    <property type="project" value="UniProtKB-KW"/>
</dbReference>
<dbReference type="CDD" id="cd20070">
    <property type="entry name" value="5TM_YidC_Alb3"/>
    <property type="match status" value="1"/>
</dbReference>
<dbReference type="CDD" id="cd19961">
    <property type="entry name" value="EcYidC-like_peri"/>
    <property type="match status" value="1"/>
</dbReference>
<dbReference type="Gene3D" id="2.70.98.90">
    <property type="match status" value="1"/>
</dbReference>
<dbReference type="HAMAP" id="MF_01810">
    <property type="entry name" value="YidC_type1"/>
    <property type="match status" value="1"/>
</dbReference>
<dbReference type="InterPro" id="IPR019998">
    <property type="entry name" value="Membr_insert_YidC"/>
</dbReference>
<dbReference type="InterPro" id="IPR028053">
    <property type="entry name" value="Membr_insert_YidC_N"/>
</dbReference>
<dbReference type="InterPro" id="IPR001708">
    <property type="entry name" value="YidC/ALB3/OXA1/COX18"/>
</dbReference>
<dbReference type="InterPro" id="IPR028055">
    <property type="entry name" value="YidC/Oxa/ALB_C"/>
</dbReference>
<dbReference type="InterPro" id="IPR047196">
    <property type="entry name" value="YidC_ALB_C"/>
</dbReference>
<dbReference type="InterPro" id="IPR038221">
    <property type="entry name" value="YidC_periplasmic_sf"/>
</dbReference>
<dbReference type="NCBIfam" id="NF002352">
    <property type="entry name" value="PRK01318.1-3"/>
    <property type="match status" value="1"/>
</dbReference>
<dbReference type="NCBIfam" id="TIGR03593">
    <property type="entry name" value="yidC_nterm"/>
    <property type="match status" value="1"/>
</dbReference>
<dbReference type="NCBIfam" id="TIGR03592">
    <property type="entry name" value="yidC_oxa1_cterm"/>
    <property type="match status" value="1"/>
</dbReference>
<dbReference type="PANTHER" id="PTHR12428:SF65">
    <property type="entry name" value="CYTOCHROME C OXIDASE ASSEMBLY PROTEIN COX18, MITOCHONDRIAL"/>
    <property type="match status" value="1"/>
</dbReference>
<dbReference type="PANTHER" id="PTHR12428">
    <property type="entry name" value="OXA1"/>
    <property type="match status" value="1"/>
</dbReference>
<dbReference type="Pfam" id="PF02096">
    <property type="entry name" value="60KD_IMP"/>
    <property type="match status" value="1"/>
</dbReference>
<dbReference type="Pfam" id="PF14849">
    <property type="entry name" value="YidC_periplas"/>
    <property type="match status" value="1"/>
</dbReference>
<dbReference type="PRINTS" id="PR00701">
    <property type="entry name" value="60KDINNERMP"/>
</dbReference>
<dbReference type="PRINTS" id="PR01900">
    <property type="entry name" value="YIDCPROTEIN"/>
</dbReference>
<evidence type="ECO:0000255" key="1">
    <source>
        <dbReference type="HAMAP-Rule" id="MF_01810"/>
    </source>
</evidence>
<name>YIDC_BURVG</name>
<sequence>MDIKRTVLWVIFFMSAVMLYDNWQRDHGRPSMFFPSATQTAPAAASGASGTGATTTAGEAPAAAAAGAAPATTAPAAQAQLVKFSTDVYDGEIDTRGGTLAKLTLKKQGDGKQPDLYITLFDHTAGHTYLARTGLLGGDFPNHNDVYTQLNPGATSLTGDQNTLKLSFESPVKGGVKVVKTYTFTRGSYVIGVDTKIDNVGTAPVTPTVYMELVRDNTAVETPMFSHTFLGPAVYTDAKHFQKINFSDLDKNKADYVNSADNGWVAMVQHYFASAWIPQQGVKRDIYAEKIDPSLYRVGVKQPVAAIAPGQSADVQARLFAGPEEERMLEGIAPGLELVKDYGWVTIIAKPLFWLLEKIHGVVGNWGWAIVLLTILIKAVFFPLSAASYKSMARMKEITPRMQALRERFKSDPQKMNAALMELYKTEKVNPFGGCLPVVIQIPVFISLYWVLLASVEMRGAPWILWIHDLSQRDPFFILPVLMAVSMYVQTSLNPTPPDPVQAKMMKFMPIAFSVMFFFFPAGLVLYYVVNNVLSIAQQYYITRKLGGVKKKPA</sequence>
<gene>
    <name evidence="1" type="primary">yidC</name>
    <name type="ordered locus">Bcep1808_3310</name>
</gene>